<protein>
    <recommendedName>
        <fullName evidence="5 6">Disintegrin ocellatusin</fullName>
    </recommendedName>
    <alternativeName>
        <fullName evidence="6">Short ocellatusion precursor Eo10c-10</fullName>
    </alternativeName>
</protein>
<accession>Q3BER1</accession>
<evidence type="ECO:0000250" key="1"/>
<evidence type="ECO:0000255" key="2"/>
<evidence type="ECO:0000255" key="3">
    <source>
        <dbReference type="PROSITE-ProRule" id="PRU00068"/>
    </source>
</evidence>
<evidence type="ECO:0000269" key="4">
    <source>
    </source>
</evidence>
<evidence type="ECO:0000303" key="5">
    <source>
    </source>
</evidence>
<evidence type="ECO:0000303" key="6">
    <source>
    </source>
</evidence>
<evidence type="ECO:0000305" key="7"/>
<evidence type="ECO:0000305" key="8">
    <source>
    </source>
</evidence>
<comment type="function">
    <text evidence="1">The disintegrin ocellatusin-10c1 is a poor inhibitor of platelet aggregation. The disintegrin inhibits the adhesion of cells expressing the RGD-dependent integrin alpha-5/beta-1 (ITGA5/ITGB1) to immobilized fibronectin. Inhibition on alpha-2b/beta-3 (ITGA2B/ITGB3) is low, and there is no inhibition on alpha-1/beta-1 (ITGA1/ITGB1), alpha-2/beta-1 (ITGA2/ITGB1) and alpha-6/beta-1 (ITGA6/ITGB1) (By similarity).</text>
</comment>
<comment type="function">
    <text evidence="4">The short monomeric disintegrin ocellatusin inhibits ADP-induced platelet aggregation (IC(50)=168 nM). Inhibits alpha-5/beta-1 (ITGA5/ITGB1) integrin and induces the expression of a ligand-induced binding site epitope on beta-1 integrin subunit. Has a direct chemotactic stimulus on human neutrophils in vitro.</text>
</comment>
<comment type="subunit">
    <text evidence="4">Monomer.</text>
</comment>
<comment type="subcellular location">
    <subcellularLocation>
        <location evidence="4">Secreted</location>
    </subcellularLocation>
</comment>
<comment type="tissue specificity">
    <text evidence="8">Expressed by the venom gland.</text>
</comment>
<comment type="mass spectrometry"/>
<comment type="similarity">
    <text evidence="7">Belongs to the disintegrin family. Short disintegrin subfamily.</text>
</comment>
<comment type="caution">
    <text evidence="7">The disintegrin is also encoded by another precursor (AC Q14FJ4).</text>
</comment>
<proteinExistence type="evidence at protein level"/>
<feature type="signal peptide" evidence="2">
    <location>
        <begin position="1"/>
        <end position="20"/>
    </location>
</feature>
<feature type="propeptide" id="PRO_0000319042" evidence="4">
    <location>
        <begin position="21"/>
        <end position="65"/>
    </location>
</feature>
<feature type="chain" id="PRO_5000076912" description="Disintegrin ocellatusin">
    <location>
        <begin position="66"/>
        <end position="115"/>
    </location>
</feature>
<feature type="propeptide" id="PRO_0000319043">
    <location>
        <begin position="116"/>
        <end position="128"/>
    </location>
</feature>
<feature type="domain" description="Disintegrin" evidence="3">
    <location>
        <begin position="26"/>
        <end position="112"/>
    </location>
</feature>
<feature type="short sequence motif" description="Cell attachment site">
    <location>
        <begin position="89"/>
        <end position="91"/>
    </location>
</feature>
<feature type="disulfide bond" evidence="3">
    <location>
        <begin position="53"/>
        <end position="59"/>
    </location>
</feature>
<feature type="disulfide bond" evidence="3">
    <location>
        <begin position="67"/>
        <end position="76"/>
    </location>
</feature>
<feature type="disulfide bond" evidence="3">
    <location>
        <begin position="72"/>
        <end position="97"/>
    </location>
</feature>
<feature type="disulfide bond" evidence="3">
    <location>
        <begin position="73"/>
        <end position="102"/>
    </location>
</feature>
<feature type="disulfide bond" evidence="3">
    <location>
        <begin position="85"/>
        <end position="104"/>
    </location>
</feature>
<feature type="sequence conflict" description="In Ref. 2; AA sequence." evidence="7" ref="2">
    <original>P</original>
    <variation>T</variation>
    <location>
        <position position="115"/>
    </location>
</feature>
<organism>
    <name type="scientific">Echis ocellatus</name>
    <name type="common">Ocellated saw-scaled viper</name>
    <dbReference type="NCBI Taxonomy" id="99586"/>
    <lineage>
        <taxon>Eukaryota</taxon>
        <taxon>Metazoa</taxon>
        <taxon>Chordata</taxon>
        <taxon>Craniata</taxon>
        <taxon>Vertebrata</taxon>
        <taxon>Euteleostomi</taxon>
        <taxon>Lepidosauria</taxon>
        <taxon>Squamata</taxon>
        <taxon>Bifurcata</taxon>
        <taxon>Unidentata</taxon>
        <taxon>Episquamata</taxon>
        <taxon>Toxicofera</taxon>
        <taxon>Serpentes</taxon>
        <taxon>Colubroidea</taxon>
        <taxon>Viperidae</taxon>
        <taxon>Viperinae</taxon>
        <taxon>Echis</taxon>
    </lineage>
</organism>
<keyword id="KW-1217">Cell adhesion impairing toxin</keyword>
<keyword id="KW-0903">Direct protein sequencing</keyword>
<keyword id="KW-1015">Disulfide bond</keyword>
<keyword id="KW-1199">Hemostasis impairing toxin</keyword>
<keyword id="KW-1201">Platelet aggregation inhibiting toxin</keyword>
<keyword id="KW-0964">Secreted</keyword>
<keyword id="KW-0732">Signal</keyword>
<keyword id="KW-0800">Toxin</keyword>
<sequence>MIPVLLVTICLAVFPFQGSSIILESGNINDYEIVYPKKVAVLPTGAMNSAHPCYDPVTCQPKEKEDCESGPCCDNCKFLKEGTICKMARGDNMHDYCNGKTCDCPRNPYKGEHDPMEWPAPAKGSVLM</sequence>
<dbReference type="EMBL" id="AM117392">
    <property type="protein sequence ID" value="CAJ40969.1"/>
    <property type="molecule type" value="mRNA"/>
</dbReference>
<dbReference type="SMR" id="Q3BER1"/>
<dbReference type="GO" id="GO:0005576">
    <property type="term" value="C:extracellular region"/>
    <property type="evidence" value="ECO:0007669"/>
    <property type="project" value="UniProtKB-SubCell"/>
</dbReference>
<dbReference type="GO" id="GO:0090729">
    <property type="term" value="F:toxin activity"/>
    <property type="evidence" value="ECO:0007669"/>
    <property type="project" value="UniProtKB-KW"/>
</dbReference>
<dbReference type="Gene3D" id="4.10.70.10">
    <property type="entry name" value="Disintegrin domain"/>
    <property type="match status" value="1"/>
</dbReference>
<dbReference type="InterPro" id="IPR018358">
    <property type="entry name" value="Disintegrin_CS"/>
</dbReference>
<dbReference type="InterPro" id="IPR001762">
    <property type="entry name" value="Disintegrin_dom"/>
</dbReference>
<dbReference type="InterPro" id="IPR036436">
    <property type="entry name" value="Disintegrin_dom_sf"/>
</dbReference>
<dbReference type="Pfam" id="PF00200">
    <property type="entry name" value="Disintegrin"/>
    <property type="match status" value="1"/>
</dbReference>
<dbReference type="PRINTS" id="PR00289">
    <property type="entry name" value="DISINTEGRIN"/>
</dbReference>
<dbReference type="SMART" id="SM00050">
    <property type="entry name" value="DISIN"/>
    <property type="match status" value="1"/>
</dbReference>
<dbReference type="SUPFAM" id="SSF57552">
    <property type="entry name" value="Blood coagulation inhibitor (disintegrin)"/>
    <property type="match status" value="1"/>
</dbReference>
<dbReference type="PROSITE" id="PS00427">
    <property type="entry name" value="DISINTEGRIN_1"/>
    <property type="match status" value="1"/>
</dbReference>
<dbReference type="PROSITE" id="PS50214">
    <property type="entry name" value="DISINTEGRIN_2"/>
    <property type="match status" value="1"/>
</dbReference>
<reference key="1">
    <citation type="journal article" date="2006" name="J. Mol. Evol.">
        <title>Molecular cloning of Echis ocellatus disintegrins reveals non-venom-secreted proteins and a pathway for the evolution of ocellatusin.</title>
        <authorList>
            <person name="Juarez P."/>
            <person name="Wagstaff S.C."/>
            <person name="Sanz L."/>
            <person name="Harrison R.A."/>
            <person name="Calvete J.J."/>
        </authorList>
    </citation>
    <scope>NUCLEOTIDE SEQUENCE [MRNA]</scope>
    <source>
        <tissue>Venom gland</tissue>
    </source>
</reference>
<reference key="2">
    <citation type="journal article" date="2002" name="FEBS Lett.">
        <title>Characterization of a monomeric disintegrin, ocellatusin, present in the venom of the Nigerian carpet viper, Echis ocellatus.</title>
        <authorList>
            <person name="Smith J.B."/>
            <person name="Theakston R.D."/>
            <person name="Coelho A.L."/>
            <person name="Barja-Fidalgo C."/>
            <person name="Calvete J.J."/>
            <person name="Marcinkiewicz C."/>
        </authorList>
    </citation>
    <scope>PROTEIN SEQUENCE OF 66-115</scope>
    <scope>FUNCTION</scope>
    <scope>SUBUNIT</scope>
    <scope>MASS SPECTROMETRY</scope>
    <scope>SUBCELLULAR LOCATION</scope>
    <source>
        <tissue>Venom</tissue>
    </source>
</reference>
<name>DIS_ECHOC</name>